<sequence>MAFLKLRDQPSLVQAIFNGDPDEVRALIFKKEDVNFQDNEKRTPLHAAAYLGDAEIIELLILSGARVNAKDSKWLTPLHRAVASCSEEAVQVLLKHSADVNARDKNWQTPLHIAAANKAVKCAEALVPLLSNVNVSDRAGRTALHHAAFSGHGEMVKLLLSRGANINAFDKKDRRAIHWAAYMGHIEVVKLLVSHGAEVTCKDKKSYTPLHAAASSGMISVVKYLLDLGVDMNEPNAYGNTPLHVACYNGQDVVVNELIDCGAIVNQKNEKGFTPLHFAAASTHGALCLELLVGNGADVNMKSKDGKTPLHMTALHGRFSRSQTIIQSGAVIDCEDKNGNTPLHIAARYGHELLINTLITSGADTAKRGIHGMFPLHLAALSGFSDCCRKLLSSGFDIDTPDDFGRTCLHAAAAGGNLECLNLLLNTGADFNKKDKFGRSPLHYAAANCNYQCLFALVGSGASVNDLDERGCTPLHYAATSDTDGKCLEYLLRNDANPGIRDKQGYNAVHYSAAYGHRLCLQLIASETPLDVLMETSGTDMLSDSDNRATISPLHLAAYHGHHQALEVLVQSLLDLDVRNSSGRTPLDLAAFKGHVECVDVLINQGASILVKDYILKRTPIHAAATNGHSECLRLLIGNAEPQNAVDIQDGNGQTPLMLSVLNGHTDCVYSLLNKGANVDAKDKWGRTALHRGAVTGHEECVDALLQHGAKCLLRDSRGRTPIHLSAACGHIGVLGALLQSAASMDANPATADNHGYTALHWACYNGHETCVELLLEQEVFQKTEGNAFSPLHCAVINDNEGAAEMLIDTLGASIVNATDSKGRTPLHAAAFTDHVECLQLLLSHNAQVNSVDSTGKTPLMMAAENGQTNTVEMLVSSASAELTLQDNSKNTALHLACSKGHETSALLILEKITDRNLINATNAALQTPLHVAARNGLTMVVQELLGKGASVLAVDENGYTPALACAPNKDVADCLALILATMMPVSSSSPLSSLTFNAINRYTNTSKTVSFEALPIMRNEPSSYCSFNNIGGEQEYLYTDVDELNDSDSETY</sequence>
<protein>
    <recommendedName>
        <fullName>Serine/threonine-protein phosphatase 6 regulatory ankyrin repeat subunit A</fullName>
        <shortName>PP6-ARS-A</shortName>
        <shortName>Serine/threonine-protein phosphatase 6 regulatory subunit ARS-A</shortName>
    </recommendedName>
    <alternativeName>
        <fullName>Ankyrin repeat domain-containing protein 28</fullName>
    </alternativeName>
    <alternativeName>
        <fullName>Phosphatase interactor targeting protein hnRNP K</fullName>
        <shortName>PITK</shortName>
    </alternativeName>
</protein>
<dbReference type="EMBL" id="AY367056">
    <property type="protein sequence ID" value="AAQ72374.1"/>
    <property type="status" value="ALT_FRAME"/>
    <property type="molecule type" value="mRNA"/>
</dbReference>
<dbReference type="EMBL" id="AB002377">
    <property type="protein sequence ID" value="BAA20833.2"/>
    <property type="status" value="ALT_INIT"/>
    <property type="molecule type" value="mRNA"/>
</dbReference>
<dbReference type="EMBL" id="AK126888">
    <property type="protein sequence ID" value="BAC86737.1"/>
    <property type="status" value="ALT_SEQ"/>
    <property type="molecule type" value="mRNA"/>
</dbReference>
<dbReference type="EMBL" id="AK293770">
    <property type="protein sequence ID" value="BAG57186.1"/>
    <property type="molecule type" value="mRNA"/>
</dbReference>
<dbReference type="EMBL" id="BC106948">
    <property type="protein sequence ID" value="AAI06949.2"/>
    <property type="molecule type" value="mRNA"/>
</dbReference>
<dbReference type="EMBL" id="BC113868">
    <property type="protein sequence ID" value="AAI13869.1"/>
    <property type="molecule type" value="mRNA"/>
</dbReference>
<dbReference type="EMBL" id="BC114476">
    <property type="protein sequence ID" value="AAI14477.1"/>
    <property type="molecule type" value="mRNA"/>
</dbReference>
<dbReference type="CCDS" id="CCDS46769.1">
    <molecule id="O15084-3"/>
</dbReference>
<dbReference type="CCDS" id="CCDS74908.1">
    <molecule id="O15084-2"/>
</dbReference>
<dbReference type="CCDS" id="CCDS93222.1">
    <molecule id="O15084-4"/>
</dbReference>
<dbReference type="RefSeq" id="NP_001182027.1">
    <molecule id="O15084-2"/>
    <property type="nucleotide sequence ID" value="NM_001195098.1"/>
</dbReference>
<dbReference type="RefSeq" id="NP_001182028.1">
    <molecule id="O15084-2"/>
    <property type="nucleotide sequence ID" value="NM_001195099.2"/>
</dbReference>
<dbReference type="RefSeq" id="NP_001336206.1">
    <molecule id="O15084-1"/>
    <property type="nucleotide sequence ID" value="NM_001349277.2"/>
</dbReference>
<dbReference type="RefSeq" id="NP_001336207.1">
    <molecule id="O15084-4"/>
    <property type="nucleotide sequence ID" value="NM_001349278.2"/>
</dbReference>
<dbReference type="RefSeq" id="NP_001336212.1">
    <molecule id="O15084-2"/>
    <property type="nucleotide sequence ID" value="NM_001349283.2"/>
</dbReference>
<dbReference type="RefSeq" id="NP_056014.2">
    <molecule id="O15084-3"/>
    <property type="nucleotide sequence ID" value="NM_015199.4"/>
</dbReference>
<dbReference type="RefSeq" id="XP_005265053.1">
    <property type="nucleotide sequence ID" value="XM_005264996.3"/>
</dbReference>
<dbReference type="RefSeq" id="XP_011531842.1">
    <property type="nucleotide sequence ID" value="XM_011533540.2"/>
</dbReference>
<dbReference type="RefSeq" id="XP_016861515.1">
    <property type="nucleotide sequence ID" value="XM_017006026.1"/>
</dbReference>
<dbReference type="RefSeq" id="XP_016861516.1">
    <property type="nucleotide sequence ID" value="XM_017006027.1"/>
</dbReference>
<dbReference type="RefSeq" id="XP_047303769.1">
    <molecule id="O15084-2"/>
    <property type="nucleotide sequence ID" value="XM_047447813.1"/>
</dbReference>
<dbReference type="RefSeq" id="XP_054201850.1">
    <molecule id="O15084-2"/>
    <property type="nucleotide sequence ID" value="XM_054345875.1"/>
</dbReference>
<dbReference type="SMR" id="O15084"/>
<dbReference type="BioGRID" id="116847">
    <property type="interactions" value="261"/>
</dbReference>
<dbReference type="CORUM" id="O15084"/>
<dbReference type="DIP" id="DIP-27583N"/>
<dbReference type="FunCoup" id="O15084">
    <property type="interactions" value="2563"/>
</dbReference>
<dbReference type="IntAct" id="O15084">
    <property type="interactions" value="160"/>
</dbReference>
<dbReference type="MINT" id="O15084"/>
<dbReference type="STRING" id="9606.ENSP00000382379"/>
<dbReference type="ChEMBL" id="CHEMBL4105921"/>
<dbReference type="GlyCosmos" id="O15084">
    <property type="glycosylation" value="1 site, 1 glycan"/>
</dbReference>
<dbReference type="GlyGen" id="O15084">
    <property type="glycosylation" value="2 sites, 1 N-linked glycan (1 site), 1 O-linked glycan (1 site)"/>
</dbReference>
<dbReference type="iPTMnet" id="O15084"/>
<dbReference type="PhosphoSitePlus" id="O15084"/>
<dbReference type="SwissPalm" id="O15084"/>
<dbReference type="BioMuta" id="ANKRD28"/>
<dbReference type="jPOST" id="O15084"/>
<dbReference type="MassIVE" id="O15084"/>
<dbReference type="PaxDb" id="9606-ENSP00000382379"/>
<dbReference type="PeptideAtlas" id="O15084"/>
<dbReference type="ProteomicsDB" id="48437">
    <molecule id="O15084-3"/>
</dbReference>
<dbReference type="ProteomicsDB" id="48438">
    <molecule id="O15084-1"/>
</dbReference>
<dbReference type="ProteomicsDB" id="48439">
    <molecule id="O15084-2"/>
</dbReference>
<dbReference type="ProteomicsDB" id="48440">
    <molecule id="O15084-4"/>
</dbReference>
<dbReference type="Pumba" id="O15084"/>
<dbReference type="Antibodypedia" id="26857">
    <property type="antibodies" value="112 antibodies from 22 providers"/>
</dbReference>
<dbReference type="DNASU" id="23243"/>
<dbReference type="Ensembl" id="ENST00000399451.6">
    <molecule id="O15084-3"/>
    <property type="protein sequence ID" value="ENSP00000382379.2"/>
    <property type="gene ID" value="ENSG00000206560.12"/>
</dbReference>
<dbReference type="Ensembl" id="ENST00000412318.5">
    <molecule id="O15084-3"/>
    <property type="protein sequence ID" value="ENSP00000397341.1"/>
    <property type="gene ID" value="ENSG00000206560.12"/>
</dbReference>
<dbReference type="Ensembl" id="ENST00000624145.3">
    <molecule id="O15084-2"/>
    <property type="protein sequence ID" value="ENSP00000485421.1"/>
    <property type="gene ID" value="ENSG00000206560.12"/>
</dbReference>
<dbReference type="Ensembl" id="ENST00000683139.1">
    <molecule id="O15084-4"/>
    <property type="protein sequence ID" value="ENSP00000508086.1"/>
    <property type="gene ID" value="ENSG00000206560.12"/>
</dbReference>
<dbReference type="GeneID" id="23243"/>
<dbReference type="KEGG" id="hsa:23243"/>
<dbReference type="MANE-Select" id="ENST00000683139.1">
    <molecule id="O15084-4"/>
    <property type="protein sequence ID" value="ENSP00000508086.1"/>
    <property type="RefSeq nucleotide sequence ID" value="NM_001349278.2"/>
    <property type="RefSeq protein sequence ID" value="NP_001336207.1"/>
</dbReference>
<dbReference type="UCSC" id="uc003cai.2">
    <molecule id="O15084-3"/>
    <property type="organism name" value="human"/>
</dbReference>
<dbReference type="AGR" id="HGNC:29024"/>
<dbReference type="CTD" id="23243"/>
<dbReference type="DisGeNET" id="23243"/>
<dbReference type="GeneCards" id="ANKRD28"/>
<dbReference type="HGNC" id="HGNC:29024">
    <property type="gene designation" value="ANKRD28"/>
</dbReference>
<dbReference type="HPA" id="ENSG00000206560">
    <property type="expression patterns" value="Low tissue specificity"/>
</dbReference>
<dbReference type="MIM" id="611122">
    <property type="type" value="gene"/>
</dbReference>
<dbReference type="neXtProt" id="NX_O15084"/>
<dbReference type="OpenTargets" id="ENSG00000206560"/>
<dbReference type="PharmGKB" id="PA134880251"/>
<dbReference type="VEuPathDB" id="HostDB:ENSG00000206560"/>
<dbReference type="eggNOG" id="KOG0504">
    <property type="taxonomic scope" value="Eukaryota"/>
</dbReference>
<dbReference type="GeneTree" id="ENSGT00950000182908"/>
<dbReference type="HOGENOM" id="CLU_000134_58_0_1"/>
<dbReference type="InParanoid" id="O15084"/>
<dbReference type="OMA" id="AMDGHTD"/>
<dbReference type="OrthoDB" id="7464126at2759"/>
<dbReference type="PAN-GO" id="O15084">
    <property type="GO annotations" value="0 GO annotations based on evolutionary models"/>
</dbReference>
<dbReference type="TreeFam" id="TF312824"/>
<dbReference type="PathwayCommons" id="O15084"/>
<dbReference type="Reactome" id="R-HSA-171319">
    <property type="pathway name" value="Telomere Extension By Telomerase"/>
</dbReference>
<dbReference type="Reactome" id="R-HSA-204005">
    <property type="pathway name" value="COPII-mediated vesicle transport"/>
</dbReference>
<dbReference type="SignaLink" id="O15084"/>
<dbReference type="SIGNOR" id="O15084"/>
<dbReference type="BioGRID-ORCS" id="23243">
    <property type="hits" value="15 hits in 1159 CRISPR screens"/>
</dbReference>
<dbReference type="ChiTaRS" id="ANKRD28">
    <property type="organism name" value="human"/>
</dbReference>
<dbReference type="GenomeRNAi" id="23243"/>
<dbReference type="Pharos" id="O15084">
    <property type="development level" value="Tbio"/>
</dbReference>
<dbReference type="PRO" id="PR:O15084"/>
<dbReference type="Proteomes" id="UP000005640">
    <property type="component" value="Chromosome 3"/>
</dbReference>
<dbReference type="RNAct" id="O15084">
    <property type="molecule type" value="protein"/>
</dbReference>
<dbReference type="Bgee" id="ENSG00000206560">
    <property type="expression patterns" value="Expressed in corpus epididymis and 207 other cell types or tissues"/>
</dbReference>
<dbReference type="ExpressionAtlas" id="O15084">
    <property type="expression patterns" value="baseline and differential"/>
</dbReference>
<dbReference type="GO" id="GO:0005829">
    <property type="term" value="C:cytosol"/>
    <property type="evidence" value="ECO:0000304"/>
    <property type="project" value="Reactome"/>
</dbReference>
<dbReference type="GO" id="GO:0005654">
    <property type="term" value="C:nucleoplasm"/>
    <property type="evidence" value="ECO:0000304"/>
    <property type="project" value="Reactome"/>
</dbReference>
<dbReference type="FunFam" id="1.25.40.20:FF:000330">
    <property type="entry name" value="Ankyrin repeat domain 28, isoform CRA_c"/>
    <property type="match status" value="1"/>
</dbReference>
<dbReference type="FunFam" id="1.25.40.20:FF:000455">
    <property type="entry name" value="Ankyrin repeat domain 28, isoform CRA_c"/>
    <property type="match status" value="1"/>
</dbReference>
<dbReference type="FunFam" id="1.25.40.20:FF:000288">
    <property type="entry name" value="Serine/threonine-protein phosphatase 6 regulatory ankyrin repeat subunit A"/>
    <property type="match status" value="1"/>
</dbReference>
<dbReference type="FunFam" id="1.25.40.20:FF:000405">
    <property type="entry name" value="Serine/threonine-protein phosphatase 6 regulatory ankyrin repeat subunit A"/>
    <property type="match status" value="1"/>
</dbReference>
<dbReference type="FunFam" id="1.25.40.20:FF:000597">
    <property type="entry name" value="Serine/threonine-protein phosphatase 6 regulatory ankyrin repeat subunit A"/>
    <property type="match status" value="1"/>
</dbReference>
<dbReference type="FunFam" id="1.25.40.20:FF:000315">
    <property type="entry name" value="serine/threonine-protein phosphatase 6 regulatory ankyrin repeat subunit A"/>
    <property type="match status" value="1"/>
</dbReference>
<dbReference type="Gene3D" id="1.25.40.20">
    <property type="entry name" value="Ankyrin repeat-containing domain"/>
    <property type="match status" value="12"/>
</dbReference>
<dbReference type="InterPro" id="IPR002110">
    <property type="entry name" value="Ankyrin_rpt"/>
</dbReference>
<dbReference type="InterPro" id="IPR036770">
    <property type="entry name" value="Ankyrin_rpt-contain_sf"/>
</dbReference>
<dbReference type="PANTHER" id="PTHR24173">
    <property type="entry name" value="ANKYRIN REPEAT CONTAINING"/>
    <property type="match status" value="1"/>
</dbReference>
<dbReference type="PANTHER" id="PTHR24173:SF74">
    <property type="entry name" value="ANKYRIN REPEAT DOMAIN-CONTAINING PROTEIN 16"/>
    <property type="match status" value="1"/>
</dbReference>
<dbReference type="Pfam" id="PF00023">
    <property type="entry name" value="Ank"/>
    <property type="match status" value="3"/>
</dbReference>
<dbReference type="Pfam" id="PF12796">
    <property type="entry name" value="Ank_2"/>
    <property type="match status" value="9"/>
</dbReference>
<dbReference type="PRINTS" id="PR01415">
    <property type="entry name" value="ANKYRIN"/>
</dbReference>
<dbReference type="SMART" id="SM00248">
    <property type="entry name" value="ANK"/>
    <property type="match status" value="28"/>
</dbReference>
<dbReference type="SUPFAM" id="SSF48403">
    <property type="entry name" value="Ankyrin repeat"/>
    <property type="match status" value="4"/>
</dbReference>
<dbReference type="PROSITE" id="PS50297">
    <property type="entry name" value="ANK_REP_REGION"/>
    <property type="match status" value="1"/>
</dbReference>
<dbReference type="PROSITE" id="PS50088">
    <property type="entry name" value="ANK_REPEAT"/>
    <property type="match status" value="24"/>
</dbReference>
<name>ANR28_HUMAN</name>
<evidence type="ECO:0000269" key="1">
    <source>
    </source>
</evidence>
<evidence type="ECO:0000269" key="2">
    <source>
    </source>
</evidence>
<evidence type="ECO:0000269" key="3">
    <source>
    </source>
</evidence>
<evidence type="ECO:0000303" key="4">
    <source>
    </source>
</evidence>
<evidence type="ECO:0000303" key="5">
    <source>
    </source>
</evidence>
<evidence type="ECO:0000303" key="6">
    <source ref="1"/>
</evidence>
<evidence type="ECO:0000305" key="7"/>
<evidence type="ECO:0000312" key="8">
    <source>
        <dbReference type="HGNC" id="HGNC:29024"/>
    </source>
</evidence>
<evidence type="ECO:0007744" key="9">
    <source>
    </source>
</evidence>
<reference key="1">
    <citation type="submission" date="2003-08" db="EMBL/GenBank/DDBJ databases">
        <title>Cloning a new transcript of KIAA0379 protein in testis.</title>
        <authorList>
            <person name="Lu L."/>
            <person name="Huang X.Y."/>
            <person name="Yin L.L."/>
            <person name="Xu M."/>
            <person name="Li J.M."/>
            <person name="Zhou Z.M."/>
            <person name="Sha J.H."/>
        </authorList>
    </citation>
    <scope>NUCLEOTIDE SEQUENCE [MRNA] (ISOFORM 2)</scope>
    <source>
        <tissue>Testis</tissue>
    </source>
</reference>
<reference key="2">
    <citation type="journal article" date="1997" name="DNA Res.">
        <title>Prediction of the coding sequences of unidentified human genes. VII. The complete sequences of 100 new cDNA clones from brain which can code for large proteins in vitro.</title>
        <authorList>
            <person name="Nagase T."/>
            <person name="Ishikawa K."/>
            <person name="Nakajima D."/>
            <person name="Ohira M."/>
            <person name="Seki N."/>
            <person name="Miyajima N."/>
            <person name="Tanaka A."/>
            <person name="Kotani H."/>
            <person name="Nomura N."/>
            <person name="Ohara O."/>
        </authorList>
    </citation>
    <scope>NUCLEOTIDE SEQUENCE [LARGE SCALE MRNA] (ISOFORM 1)</scope>
    <source>
        <tissue>Brain</tissue>
    </source>
</reference>
<reference key="3">
    <citation type="journal article" date="2002" name="DNA Res.">
        <title>Construction of expression-ready cDNA clones for KIAA genes: manual curation of 330 KIAA cDNA clones.</title>
        <authorList>
            <person name="Nakajima D."/>
            <person name="Okazaki N."/>
            <person name="Yamakawa H."/>
            <person name="Kikuno R."/>
            <person name="Ohara O."/>
            <person name="Nagase T."/>
        </authorList>
    </citation>
    <scope>SEQUENCE REVISION</scope>
</reference>
<reference key="4">
    <citation type="journal article" date="2004" name="Nat. Genet.">
        <title>Complete sequencing and characterization of 21,243 full-length human cDNAs.</title>
        <authorList>
            <person name="Ota T."/>
            <person name="Suzuki Y."/>
            <person name="Nishikawa T."/>
            <person name="Otsuki T."/>
            <person name="Sugiyama T."/>
            <person name="Irie R."/>
            <person name="Wakamatsu A."/>
            <person name="Hayashi K."/>
            <person name="Sato H."/>
            <person name="Nagai K."/>
            <person name="Kimura K."/>
            <person name="Makita H."/>
            <person name="Sekine M."/>
            <person name="Obayashi M."/>
            <person name="Nishi T."/>
            <person name="Shibahara T."/>
            <person name="Tanaka T."/>
            <person name="Ishii S."/>
            <person name="Yamamoto J."/>
            <person name="Saito K."/>
            <person name="Kawai Y."/>
            <person name="Isono Y."/>
            <person name="Nakamura Y."/>
            <person name="Nagahari K."/>
            <person name="Murakami K."/>
            <person name="Yasuda T."/>
            <person name="Iwayanagi T."/>
            <person name="Wagatsuma M."/>
            <person name="Shiratori A."/>
            <person name="Sudo H."/>
            <person name="Hosoiri T."/>
            <person name="Kaku Y."/>
            <person name="Kodaira H."/>
            <person name="Kondo H."/>
            <person name="Sugawara M."/>
            <person name="Takahashi M."/>
            <person name="Kanda K."/>
            <person name="Yokoi T."/>
            <person name="Furuya T."/>
            <person name="Kikkawa E."/>
            <person name="Omura Y."/>
            <person name="Abe K."/>
            <person name="Kamihara K."/>
            <person name="Katsuta N."/>
            <person name="Sato K."/>
            <person name="Tanikawa M."/>
            <person name="Yamazaki M."/>
            <person name="Ninomiya K."/>
            <person name="Ishibashi T."/>
            <person name="Yamashita H."/>
            <person name="Murakawa K."/>
            <person name="Fujimori K."/>
            <person name="Tanai H."/>
            <person name="Kimata M."/>
            <person name="Watanabe M."/>
            <person name="Hiraoka S."/>
            <person name="Chiba Y."/>
            <person name="Ishida S."/>
            <person name="Ono Y."/>
            <person name="Takiguchi S."/>
            <person name="Watanabe S."/>
            <person name="Yosida M."/>
            <person name="Hotuta T."/>
            <person name="Kusano J."/>
            <person name="Kanehori K."/>
            <person name="Takahashi-Fujii A."/>
            <person name="Hara H."/>
            <person name="Tanase T.-O."/>
            <person name="Nomura Y."/>
            <person name="Togiya S."/>
            <person name="Komai F."/>
            <person name="Hara R."/>
            <person name="Takeuchi K."/>
            <person name="Arita M."/>
            <person name="Imose N."/>
            <person name="Musashino K."/>
            <person name="Yuuki H."/>
            <person name="Oshima A."/>
            <person name="Sasaki N."/>
            <person name="Aotsuka S."/>
            <person name="Yoshikawa Y."/>
            <person name="Matsunawa H."/>
            <person name="Ichihara T."/>
            <person name="Shiohata N."/>
            <person name="Sano S."/>
            <person name="Moriya S."/>
            <person name="Momiyama H."/>
            <person name="Satoh N."/>
            <person name="Takami S."/>
            <person name="Terashima Y."/>
            <person name="Suzuki O."/>
            <person name="Nakagawa S."/>
            <person name="Senoh A."/>
            <person name="Mizoguchi H."/>
            <person name="Goto Y."/>
            <person name="Shimizu F."/>
            <person name="Wakebe H."/>
            <person name="Hishigaki H."/>
            <person name="Watanabe T."/>
            <person name="Sugiyama A."/>
            <person name="Takemoto M."/>
            <person name="Kawakami B."/>
            <person name="Yamazaki M."/>
            <person name="Watanabe K."/>
            <person name="Kumagai A."/>
            <person name="Itakura S."/>
            <person name="Fukuzumi Y."/>
            <person name="Fujimori Y."/>
            <person name="Komiyama M."/>
            <person name="Tashiro H."/>
            <person name="Tanigami A."/>
            <person name="Fujiwara T."/>
            <person name="Ono T."/>
            <person name="Yamada K."/>
            <person name="Fujii Y."/>
            <person name="Ozaki K."/>
            <person name="Hirao M."/>
            <person name="Ohmori Y."/>
            <person name="Kawabata A."/>
            <person name="Hikiji T."/>
            <person name="Kobatake N."/>
            <person name="Inagaki H."/>
            <person name="Ikema Y."/>
            <person name="Okamoto S."/>
            <person name="Okitani R."/>
            <person name="Kawakami T."/>
            <person name="Noguchi S."/>
            <person name="Itoh T."/>
            <person name="Shigeta K."/>
            <person name="Senba T."/>
            <person name="Matsumura K."/>
            <person name="Nakajima Y."/>
            <person name="Mizuno T."/>
            <person name="Morinaga M."/>
            <person name="Sasaki M."/>
            <person name="Togashi T."/>
            <person name="Oyama M."/>
            <person name="Hata H."/>
            <person name="Watanabe M."/>
            <person name="Komatsu T."/>
            <person name="Mizushima-Sugano J."/>
            <person name="Satoh T."/>
            <person name="Shirai Y."/>
            <person name="Takahashi Y."/>
            <person name="Nakagawa K."/>
            <person name="Okumura K."/>
            <person name="Nagase T."/>
            <person name="Nomura N."/>
            <person name="Kikuchi H."/>
            <person name="Masuho Y."/>
            <person name="Yamashita R."/>
            <person name="Nakai K."/>
            <person name="Yada T."/>
            <person name="Nakamura Y."/>
            <person name="Ohara O."/>
            <person name="Isogai T."/>
            <person name="Sugano S."/>
        </authorList>
    </citation>
    <scope>NUCLEOTIDE SEQUENCE [LARGE SCALE MRNA] (ISOFORM 2)</scope>
    <scope>NUCLEOTIDE SEQUENCE [LARGE SCALE MRNA] OF 1-767 (ISOFORM 3)</scope>
    <source>
        <tissue>Amygdala</tissue>
        <tissue>Cerebellum</tissue>
    </source>
</reference>
<reference key="5">
    <citation type="journal article" date="2004" name="Genome Res.">
        <title>The status, quality, and expansion of the NIH full-length cDNA project: the Mammalian Gene Collection (MGC).</title>
        <authorList>
            <consortium name="The MGC Project Team"/>
        </authorList>
    </citation>
    <scope>NUCLEOTIDE SEQUENCE [LARGE SCALE MRNA] OF 1-752 (ISOFORMS 3 AND 4)</scope>
</reference>
<reference key="6">
    <citation type="journal article" date="2006" name="Cell. Signal.">
        <title>PITK, a PP1 targeting subunit that modulates the phosphorylation of the transcriptional regulator hnRNP K.</title>
        <authorList>
            <person name="Kwiek N.C."/>
            <person name="Thacker D.F."/>
            <person name="Datto M.B."/>
            <person name="Megosh H.B."/>
            <person name="Haystead T.A.J."/>
        </authorList>
    </citation>
    <scope>FUNCTION</scope>
    <scope>SUBCELLULAR LOCATION</scope>
    <scope>INTERACTION WITH PPP1C AND HNRPK</scope>
    <scope>PHOSPHORYLATION AT SER-1007 AND SER-1011</scope>
    <scope>MUTAGENESIS OF 1007-SER--SER-1011</scope>
</reference>
<reference key="7">
    <citation type="journal article" date="2008" name="Biochemistry">
        <title>Protein phosphatase 6 regulatory subunits composed of ankyrin repeat domains.</title>
        <authorList>
            <person name="Stefansson B."/>
            <person name="Ohama T."/>
            <person name="Daugherty A.E."/>
            <person name="Brautigan D.L."/>
        </authorList>
    </citation>
    <scope>FUNCTION</scope>
    <scope>INTERACTION WITH PPP6C; PPP6R1 AND PPP6R3</scope>
</reference>
<reference key="8">
    <citation type="journal article" date="2008" name="Mol. Cell">
        <title>Kinase-selective enrichment enables quantitative phosphoproteomics of the kinome across the cell cycle.</title>
        <authorList>
            <person name="Daub H."/>
            <person name="Olsen J.V."/>
            <person name="Bairlein M."/>
            <person name="Gnad F."/>
            <person name="Oppermann F.S."/>
            <person name="Korner R."/>
            <person name="Greff Z."/>
            <person name="Keri G."/>
            <person name="Stemmann O."/>
            <person name="Mann M."/>
        </authorList>
    </citation>
    <scope>IDENTIFICATION BY MASS SPECTROMETRY [LARGE SCALE ANALYSIS]</scope>
    <source>
        <tissue>Cervix carcinoma</tissue>
    </source>
</reference>
<reference key="9">
    <citation type="journal article" date="2008" name="Proc. Natl. Acad. Sci. U.S.A.">
        <title>A quantitative atlas of mitotic phosphorylation.</title>
        <authorList>
            <person name="Dephoure N."/>
            <person name="Zhou C."/>
            <person name="Villen J."/>
            <person name="Beausoleil S.A."/>
            <person name="Bakalarski C.E."/>
            <person name="Elledge S.J."/>
            <person name="Gygi S.P."/>
        </authorList>
    </citation>
    <scope>IDENTIFICATION BY MASS SPECTROMETRY [LARGE SCALE ANALYSIS]</scope>
    <source>
        <tissue>Cervix carcinoma</tissue>
    </source>
</reference>
<reference key="10">
    <citation type="journal article" date="2009" name="Mol. Cell. Proteomics">
        <title>Large-scale proteomics analysis of the human kinome.</title>
        <authorList>
            <person name="Oppermann F.S."/>
            <person name="Gnad F."/>
            <person name="Olsen J.V."/>
            <person name="Hornberger R."/>
            <person name="Greff Z."/>
            <person name="Keri G."/>
            <person name="Mann M."/>
            <person name="Daub H."/>
        </authorList>
    </citation>
    <scope>IDENTIFICATION BY MASS SPECTROMETRY [LARGE SCALE ANALYSIS]</scope>
</reference>
<reference key="11">
    <citation type="journal article" date="2011" name="BMC Syst. Biol.">
        <title>Initial characterization of the human central proteome.</title>
        <authorList>
            <person name="Burkard T.R."/>
            <person name="Planyavsky M."/>
            <person name="Kaupe I."/>
            <person name="Breitwieser F.P."/>
            <person name="Buerckstuemmer T."/>
            <person name="Bennett K.L."/>
            <person name="Superti-Furga G."/>
            <person name="Colinge J."/>
        </authorList>
    </citation>
    <scope>IDENTIFICATION BY MASS SPECTROMETRY [LARGE SCALE ANALYSIS]</scope>
</reference>
<reference key="12">
    <citation type="journal article" date="2013" name="J. Proteome Res.">
        <title>Toward a comprehensive characterization of a human cancer cell phosphoproteome.</title>
        <authorList>
            <person name="Zhou H."/>
            <person name="Di Palma S."/>
            <person name="Preisinger C."/>
            <person name="Peng M."/>
            <person name="Polat A.N."/>
            <person name="Heck A.J."/>
            <person name="Mohammed S."/>
        </authorList>
    </citation>
    <scope>PHOSPHORYLATION [LARGE SCALE ANALYSIS] AT SER-1011</scope>
    <scope>IDENTIFICATION BY MASS SPECTROMETRY [LARGE SCALE ANALYSIS]</scope>
    <source>
        <tissue>Erythroleukemia</tissue>
    </source>
</reference>
<reference key="13">
    <citation type="journal article" date="2022" name="Life. Sci Alliance">
        <title>Rab40c regulates focal adhesions and PP6 activity by controlling ANKRD28 ubiquitylation.</title>
        <authorList>
            <person name="Han K.J."/>
            <person name="Mikalayeva V."/>
            <person name="Gerber S.A."/>
            <person name="Kettenbach A.N."/>
            <person name="Skeberdis V.A."/>
            <person name="Prekeris R."/>
        </authorList>
    </citation>
    <scope>FUNCTION</scope>
    <scope>SUBCELLULAR LOCATION</scope>
    <scope>UBIQUITINATION</scope>
</reference>
<gene>
    <name evidence="8" type="primary">ANKRD28</name>
    <name type="synonym">KIAA0379</name>
</gene>
<proteinExistence type="evidence at protein level"/>
<comment type="function">
    <text evidence="1 2 3">Regulatory subunit of protein phosphatase 6 (PP6) that may be involved in the recognition of phosphoprotein substrates. Involved in the PP6-mediated dephosphorylation of NFKBIE opposing its degradation in response to TNF-alpha. Selectively inhibits the phosphatase activity of PPP1C. Targets PPP1C to modulate HNRPK phosphorylation. Involved in the PP6-mediated dephosphorylation of MOB1 and induced focal adhesion assembly during cell migration (PubMed:35512830).</text>
</comment>
<comment type="subunit">
    <text evidence="1 2">Protein phosphatase 6 (PP6) holoenzyme is proposed to be a heterotrimeric complex formed by the catalytic subunit, a SAPS domain-containing subunit (PP6R) and an ankyrin repeat-domain containing regulatory subunit (ARS) (PubMed:18186651). Interacts with PPP6C, PPP6R1 and PPP6R3 (PubMed:18186651). Interacts with PPP1C and HNRPK (PubMed:16564677).</text>
</comment>
<comment type="interaction">
    <interactant intactId="EBI-359567">
        <id>O15084</id>
    </interactant>
    <interactant intactId="EBI-446740">
        <id>Q14185</id>
        <label>DOCK1</label>
    </interactant>
    <organismsDiffer>false</organismsDiffer>
    <experiments>4</experiments>
</comment>
<comment type="interaction">
    <interactant intactId="EBI-359567">
        <id>O15084</id>
    </interactant>
    <interactant intactId="EBI-353818">
        <id>O15371</id>
        <label>EIF3D</label>
    </interactant>
    <organismsDiffer>false</organismsDiffer>
    <experiments>3</experiments>
</comment>
<comment type="interaction">
    <interactant intactId="EBI-359567">
        <id>O15084</id>
    </interactant>
    <interactant intactId="EBI-372506">
        <id>Q8TAE8</id>
        <label>GADD45GIP1</label>
    </interactant>
    <organismsDiffer>false</organismsDiffer>
    <experiments>3</experiments>
</comment>
<comment type="interaction">
    <interactant intactId="EBI-359567">
        <id>O15084</id>
    </interactant>
    <interactant intactId="EBI-6509505">
        <id>Q0VD86</id>
        <label>INCA1</label>
    </interactant>
    <organismsDiffer>false</organismsDiffer>
    <experiments>3</experiments>
</comment>
<comment type="interaction">
    <interactant intactId="EBI-359567">
        <id>O15084</id>
    </interactant>
    <interactant intactId="EBI-12014650">
        <id>Q8TDN2</id>
        <label>KCNV2</label>
    </interactant>
    <organismsDiffer>false</organismsDiffer>
    <experiments>3</experiments>
</comment>
<comment type="interaction">
    <interactant intactId="EBI-359567">
        <id>O15084</id>
    </interactant>
    <interactant intactId="EBI-14086479">
        <id>Q8IVT4</id>
        <label>MGC50722</label>
    </interactant>
    <organismsDiffer>false</organismsDiffer>
    <experiments>3</experiments>
</comment>
<comment type="interaction">
    <interactant intactId="EBI-359567">
        <id>O15084</id>
    </interactant>
    <interactant intactId="EBI-14066006">
        <id>Q4G0R1</id>
        <label>PIBF1</label>
    </interactant>
    <organismsDiffer>false</organismsDiffer>
    <experiments>3</experiments>
</comment>
<comment type="interaction">
    <interactant intactId="EBI-359567">
        <id>O15084</id>
    </interactant>
    <interactant intactId="EBI-359751">
        <id>O00743</id>
        <label>PPP6C</label>
    </interactant>
    <organismsDiffer>false</organismsDiffer>
    <experiments>13</experiments>
</comment>
<comment type="interaction">
    <interactant intactId="EBI-359567">
        <id>O15084</id>
    </interactant>
    <interactant intactId="EBI-359745">
        <id>Q9UPN7</id>
        <label>PPP6R1</label>
    </interactant>
    <organismsDiffer>false</organismsDiffer>
    <experiments>12</experiments>
</comment>
<comment type="interaction">
    <interactant intactId="EBI-359567">
        <id>O15084</id>
    </interactant>
    <interactant intactId="EBI-359739">
        <id>O75170</id>
        <label>PPP6R2</label>
    </interactant>
    <organismsDiffer>false</organismsDiffer>
    <experiments>9</experiments>
</comment>
<comment type="interaction">
    <interactant intactId="EBI-359567">
        <id>O15084</id>
    </interactant>
    <interactant intactId="EBI-355498">
        <id>Q5H9R7</id>
        <label>PPP6R3</label>
    </interactant>
    <organismsDiffer>false</organismsDiffer>
    <experiments>6</experiments>
</comment>
<comment type="interaction">
    <interactant intactId="EBI-359567">
        <id>O15084</id>
    </interactant>
    <interactant intactId="EBI-2602515">
        <id>Q86Y79</id>
        <label>PTRH1</label>
    </interactant>
    <organismsDiffer>false</organismsDiffer>
    <experiments>3</experiments>
</comment>
<comment type="interaction">
    <interactant intactId="EBI-359567">
        <id>O15084</id>
    </interactant>
    <interactant intactId="EBI-741350">
        <id>Q9BT49</id>
        <label>THAP7</label>
    </interactant>
    <organismsDiffer>false</organismsDiffer>
    <experiments>3</experiments>
</comment>
<comment type="interaction">
    <interactant intactId="EBI-359567">
        <id>O15084</id>
    </interactant>
    <interactant intactId="EBI-4398527">
        <id>Q9H2K2</id>
        <label>TNKS2</label>
    </interactant>
    <organismsDiffer>false</organismsDiffer>
    <experiments>3</experiments>
</comment>
<comment type="interaction">
    <interactant intactId="EBI-359567">
        <id>O15084</id>
    </interactant>
    <interactant intactId="EBI-2849854">
        <id>Q96MU7</id>
        <label>YTHDC1</label>
    </interactant>
    <organismsDiffer>false</organismsDiffer>
    <experiments>3</experiments>
</comment>
<comment type="subcellular location">
    <subcellularLocation>
        <location evidence="1">Nucleus</location>
        <location evidence="1">Nucleoplasm</location>
    </subcellularLocation>
    <subcellularLocation>
        <location evidence="3">Cytoplasm</location>
        <location evidence="3">Cytosol</location>
    </subcellularLocation>
    <subcellularLocation>
        <location evidence="3">Cell projection</location>
        <location evidence="3">Lamellipodium</location>
    </subcellularLocation>
    <text evidence="3">Seems to be excluded from nucleoli. Mostly localized in the cytosol, but a fraction could be observed at the lamellipodia (PubMed:35512830).</text>
</comment>
<comment type="alternative products">
    <event type="alternative promoter"/>
    <event type="alternative splicing"/>
    <isoform>
        <id>O15084-3</id>
        <name>1</name>
        <sequence type="displayed"/>
    </isoform>
    <isoform>
        <id>O15084-2</id>
        <name>2</name>
        <sequence type="described" ref="VSP_012433"/>
    </isoform>
    <isoform>
        <id>O15084-1</id>
        <name>3</name>
        <sequence type="described" ref="VSP_041013"/>
    </isoform>
    <isoform>
        <id>O15084-4</id>
        <name>4</name>
        <sequence type="described" ref="VSP_041014"/>
    </isoform>
</comment>
<comment type="PTM">
    <text evidence="3">Ubiquitinated by the ECS(RAB40C) complex leading to its degradation and decreased PP6 activity.</text>
</comment>
<comment type="miscellaneous">
    <molecule>Isoform 2</molecule>
    <text evidence="7">Produced by alternative promoter usage.</text>
</comment>
<comment type="sequence caution" evidence="7">
    <conflict type="frameshift">
        <sequence resource="EMBL-CDS" id="AAQ72374"/>
    </conflict>
</comment>
<comment type="sequence caution" evidence="7">
    <conflict type="erroneous initiation">
        <sequence resource="EMBL-CDS" id="BAA20833"/>
    </conflict>
    <text>Extended N-terminus.</text>
</comment>
<comment type="sequence caution" evidence="7">
    <conflict type="miscellaneous discrepancy">
        <sequence resource="EMBL-CDS" id="BAC86737"/>
    </conflict>
    <text>Intron retention.</text>
</comment>
<feature type="chain" id="PRO_0000066919" description="Serine/threonine-protein phosphatase 6 regulatory ankyrin repeat subunit A">
    <location>
        <begin position="1"/>
        <end position="1053"/>
    </location>
</feature>
<feature type="repeat" description="ANK 1">
    <location>
        <begin position="40"/>
        <end position="69"/>
    </location>
</feature>
<feature type="repeat" description="ANK 2">
    <location>
        <begin position="73"/>
        <end position="102"/>
    </location>
</feature>
<feature type="repeat" description="ANK 3">
    <location>
        <begin position="106"/>
        <end position="135"/>
    </location>
</feature>
<feature type="repeat" description="ANK 4">
    <location>
        <begin position="139"/>
        <end position="168"/>
    </location>
</feature>
<feature type="repeat" description="ANK 5">
    <location>
        <begin position="172"/>
        <end position="201"/>
    </location>
</feature>
<feature type="repeat" description="ANK 6">
    <location>
        <begin position="205"/>
        <end position="234"/>
    </location>
</feature>
<feature type="repeat" description="ANK 7">
    <location>
        <begin position="238"/>
        <end position="267"/>
    </location>
</feature>
<feature type="repeat" description="ANK 8">
    <location>
        <begin position="271"/>
        <end position="301"/>
    </location>
</feature>
<feature type="repeat" description="ANK 9">
    <location>
        <begin position="305"/>
        <end position="334"/>
    </location>
</feature>
<feature type="repeat" description="ANK 10">
    <location>
        <begin position="338"/>
        <end position="367"/>
    </location>
</feature>
<feature type="repeat" description="ANK 11">
    <location>
        <begin position="371"/>
        <end position="400"/>
    </location>
</feature>
<feature type="repeat" description="ANK 12">
    <location>
        <begin position="404"/>
        <end position="433"/>
    </location>
</feature>
<feature type="repeat" description="ANK 13">
    <location>
        <begin position="437"/>
        <end position="466"/>
    </location>
</feature>
<feature type="repeat" description="ANK 14">
    <location>
        <begin position="470"/>
        <end position="500"/>
    </location>
</feature>
<feature type="repeat" description="ANK 15">
    <location>
        <begin position="504"/>
        <end position="534"/>
    </location>
</feature>
<feature type="repeat" description="ANK 16">
    <location>
        <begin position="549"/>
        <end position="578"/>
    </location>
</feature>
<feature type="repeat" description="ANK 17">
    <location>
        <begin position="582"/>
        <end position="611"/>
    </location>
</feature>
<feature type="repeat" description="ANK 18">
    <location>
        <begin position="616"/>
        <end position="645"/>
    </location>
</feature>
<feature type="repeat" description="ANK 19">
    <location>
        <begin position="652"/>
        <end position="681"/>
    </location>
</feature>
<feature type="repeat" description="ANK 20">
    <location>
        <begin position="685"/>
        <end position="714"/>
    </location>
</feature>
<feature type="repeat" description="ANK 21">
    <location>
        <begin position="718"/>
        <end position="747"/>
    </location>
</feature>
<feature type="repeat" description="ANK 22">
    <location>
        <begin position="755"/>
        <end position="784"/>
    </location>
</feature>
<feature type="repeat" description="ANK 23">
    <location>
        <begin position="787"/>
        <end position="817"/>
    </location>
</feature>
<feature type="repeat" description="ANK 24">
    <location>
        <begin position="822"/>
        <end position="851"/>
    </location>
</feature>
<feature type="repeat" description="ANK 25">
    <location>
        <begin position="855"/>
        <end position="885"/>
    </location>
</feature>
<feature type="repeat" description="ANK 26">
    <location>
        <begin position="889"/>
        <end position="918"/>
    </location>
</feature>
<feature type="repeat" description="ANK 27">
    <location>
        <begin position="925"/>
        <end position="954"/>
    </location>
</feature>
<feature type="modified residue" description="Phosphoserine" evidence="1">
    <location>
        <position position="1007"/>
    </location>
</feature>
<feature type="modified residue" description="Phosphoserine" evidence="1 9">
    <location>
        <position position="1011"/>
    </location>
</feature>
<feature type="splice variant" id="VSP_012433" description="In isoform 2." evidence="4 6">
    <location>
        <begin position="1"/>
        <end position="154"/>
    </location>
</feature>
<feature type="splice variant" id="VSP_041013" description="In isoform 3." evidence="4 5">
    <original>MAFLKLRDQ</original>
    <variation>MSRVCIVVLEEVEDESPAFISKLPQENKSLHSPPSGNVLVRY</variation>
    <location>
        <begin position="1"/>
        <end position="9"/>
    </location>
</feature>
<feature type="splice variant" id="VSP_041014" description="In isoform 4." evidence="5">
    <original>MAFLKLRDQ</original>
    <variation>MSRVCIVVLEEVEDESPAFISKLPQENKSLHSPPSGNVL</variation>
    <location>
        <begin position="1"/>
        <end position="9"/>
    </location>
</feature>
<feature type="mutagenesis site" description="Marked decrease in phosphorylation. Increased PPP1C-binding. No effect on HNRPK-binding." evidence="1">
    <original>SKTVS</original>
    <variation>AKTVA</variation>
    <location>
        <begin position="1007"/>
        <end position="1011"/>
    </location>
</feature>
<feature type="sequence conflict" description="In Ref. 1; AAQ72374." evidence="7" ref="1">
    <original>V</original>
    <variation>A</variation>
    <location>
        <position position="293"/>
    </location>
</feature>
<feature type="sequence conflict" description="In Ref. 1; AAQ72374 and 4; BAC86737." evidence="7" ref="1 4">
    <original>I</original>
    <variation>V</variation>
    <location>
        <position position="500"/>
    </location>
</feature>
<organism>
    <name type="scientific">Homo sapiens</name>
    <name type="common">Human</name>
    <dbReference type="NCBI Taxonomy" id="9606"/>
    <lineage>
        <taxon>Eukaryota</taxon>
        <taxon>Metazoa</taxon>
        <taxon>Chordata</taxon>
        <taxon>Craniata</taxon>
        <taxon>Vertebrata</taxon>
        <taxon>Euteleostomi</taxon>
        <taxon>Mammalia</taxon>
        <taxon>Eutheria</taxon>
        <taxon>Euarchontoglires</taxon>
        <taxon>Primates</taxon>
        <taxon>Haplorrhini</taxon>
        <taxon>Catarrhini</taxon>
        <taxon>Hominidae</taxon>
        <taxon>Homo</taxon>
    </lineage>
</organism>
<accession>O15084</accession>
<accession>B4DES5</accession>
<accession>Q1WWL4</accession>
<accession>Q29RW6</accession>
<accession>Q3B857</accession>
<accession>Q6ULS0</accession>
<accession>Q6ZT57</accession>
<keyword id="KW-0877">Alternative promoter usage</keyword>
<keyword id="KW-0025">Alternative splicing</keyword>
<keyword id="KW-0040">ANK repeat</keyword>
<keyword id="KW-0966">Cell projection</keyword>
<keyword id="KW-0963">Cytoplasm</keyword>
<keyword id="KW-0539">Nucleus</keyword>
<keyword id="KW-0597">Phosphoprotein</keyword>
<keyword id="KW-1267">Proteomics identification</keyword>
<keyword id="KW-1185">Reference proteome</keyword>
<keyword id="KW-0677">Repeat</keyword>
<keyword id="KW-0832">Ubl conjugation</keyword>